<dbReference type="EC" id="7.1.1.-" evidence="1"/>
<dbReference type="EMBL" id="CP001337">
    <property type="protein sequence ID" value="ACL23953.1"/>
    <property type="molecule type" value="Genomic_DNA"/>
</dbReference>
<dbReference type="RefSeq" id="WP_012616317.1">
    <property type="nucleotide sequence ID" value="NC_011831.1"/>
</dbReference>
<dbReference type="SMR" id="B8G6Z6"/>
<dbReference type="STRING" id="326427.Cagg_1039"/>
<dbReference type="KEGG" id="cag:Cagg_1039"/>
<dbReference type="eggNOG" id="COG0713">
    <property type="taxonomic scope" value="Bacteria"/>
</dbReference>
<dbReference type="HOGENOM" id="CLU_144724_0_0_0"/>
<dbReference type="OrthoDB" id="9810120at2"/>
<dbReference type="Proteomes" id="UP000002508">
    <property type="component" value="Chromosome"/>
</dbReference>
<dbReference type="GO" id="GO:0030964">
    <property type="term" value="C:NADH dehydrogenase complex"/>
    <property type="evidence" value="ECO:0007669"/>
    <property type="project" value="TreeGrafter"/>
</dbReference>
<dbReference type="GO" id="GO:0005886">
    <property type="term" value="C:plasma membrane"/>
    <property type="evidence" value="ECO:0007669"/>
    <property type="project" value="UniProtKB-SubCell"/>
</dbReference>
<dbReference type="GO" id="GO:0050136">
    <property type="term" value="F:NADH:ubiquinone reductase (non-electrogenic) activity"/>
    <property type="evidence" value="ECO:0007669"/>
    <property type="project" value="UniProtKB-UniRule"/>
</dbReference>
<dbReference type="GO" id="GO:0048038">
    <property type="term" value="F:quinone binding"/>
    <property type="evidence" value="ECO:0007669"/>
    <property type="project" value="UniProtKB-KW"/>
</dbReference>
<dbReference type="GO" id="GO:0042773">
    <property type="term" value="P:ATP synthesis coupled electron transport"/>
    <property type="evidence" value="ECO:0007669"/>
    <property type="project" value="InterPro"/>
</dbReference>
<dbReference type="FunFam" id="1.10.287.3510:FF:000001">
    <property type="entry name" value="NADH-quinone oxidoreductase subunit K"/>
    <property type="match status" value="1"/>
</dbReference>
<dbReference type="Gene3D" id="1.10.287.3510">
    <property type="match status" value="1"/>
</dbReference>
<dbReference type="HAMAP" id="MF_01456">
    <property type="entry name" value="NDH1_NuoK"/>
    <property type="match status" value="1"/>
</dbReference>
<dbReference type="InterPro" id="IPR001133">
    <property type="entry name" value="NADH_UbQ_OxRdtase_chain4L/K"/>
</dbReference>
<dbReference type="InterPro" id="IPR039428">
    <property type="entry name" value="NUOK/Mnh_C1-like"/>
</dbReference>
<dbReference type="NCBIfam" id="NF004320">
    <property type="entry name" value="PRK05715.1-2"/>
    <property type="match status" value="1"/>
</dbReference>
<dbReference type="NCBIfam" id="NF004321">
    <property type="entry name" value="PRK05715.1-3"/>
    <property type="match status" value="1"/>
</dbReference>
<dbReference type="NCBIfam" id="NF004323">
    <property type="entry name" value="PRK05715.1-5"/>
    <property type="match status" value="1"/>
</dbReference>
<dbReference type="PANTHER" id="PTHR11434:SF21">
    <property type="entry name" value="NADH DEHYDROGENASE SUBUNIT 4L-RELATED"/>
    <property type="match status" value="1"/>
</dbReference>
<dbReference type="PANTHER" id="PTHR11434">
    <property type="entry name" value="NADH-UBIQUINONE OXIDOREDUCTASE SUBUNIT ND4L"/>
    <property type="match status" value="1"/>
</dbReference>
<dbReference type="Pfam" id="PF00420">
    <property type="entry name" value="Oxidored_q2"/>
    <property type="match status" value="1"/>
</dbReference>
<gene>
    <name evidence="1" type="primary">nuoK</name>
    <name type="ordered locus">Cagg_1039</name>
</gene>
<sequence length="100" mass="10727">MVPTSYYVLLSAILFTIGVLGVLLRRNAIVIFMSVELMLNAANLALVAFARERLGVEAQAIVFFVITVAAAEVAVGLALLVSIFRTKRTADVDEVSTLKG</sequence>
<keyword id="KW-1003">Cell membrane</keyword>
<keyword id="KW-0472">Membrane</keyword>
<keyword id="KW-0520">NAD</keyword>
<keyword id="KW-0874">Quinone</keyword>
<keyword id="KW-1278">Translocase</keyword>
<keyword id="KW-0812">Transmembrane</keyword>
<keyword id="KW-1133">Transmembrane helix</keyword>
<keyword id="KW-0813">Transport</keyword>
<keyword id="KW-0830">Ubiquinone</keyword>
<reference key="1">
    <citation type="submission" date="2008-12" db="EMBL/GenBank/DDBJ databases">
        <title>Complete sequence of Chloroflexus aggregans DSM 9485.</title>
        <authorList>
            <consortium name="US DOE Joint Genome Institute"/>
            <person name="Lucas S."/>
            <person name="Copeland A."/>
            <person name="Lapidus A."/>
            <person name="Glavina del Rio T."/>
            <person name="Dalin E."/>
            <person name="Tice H."/>
            <person name="Pitluck S."/>
            <person name="Foster B."/>
            <person name="Larimer F."/>
            <person name="Land M."/>
            <person name="Hauser L."/>
            <person name="Kyrpides N."/>
            <person name="Mikhailova N."/>
            <person name="Bryant D.A."/>
            <person name="Richardson P."/>
        </authorList>
    </citation>
    <scope>NUCLEOTIDE SEQUENCE [LARGE SCALE GENOMIC DNA]</scope>
    <source>
        <strain>MD-66 / DSM 9485</strain>
    </source>
</reference>
<comment type="function">
    <text evidence="1">NDH-1 shuttles electrons from NADH, via FMN and iron-sulfur (Fe-S) centers, to quinones in the respiratory chain. The immediate electron acceptor for the enzyme in this species is believed to be ubiquinone. Couples the redox reaction to proton translocation (for every two electrons transferred, four hydrogen ions are translocated across the cytoplasmic membrane), and thus conserves the redox energy in a proton gradient.</text>
</comment>
<comment type="catalytic activity">
    <reaction evidence="1">
        <text>a quinone + NADH + 5 H(+)(in) = a quinol + NAD(+) + 4 H(+)(out)</text>
        <dbReference type="Rhea" id="RHEA:57888"/>
        <dbReference type="ChEBI" id="CHEBI:15378"/>
        <dbReference type="ChEBI" id="CHEBI:24646"/>
        <dbReference type="ChEBI" id="CHEBI:57540"/>
        <dbReference type="ChEBI" id="CHEBI:57945"/>
        <dbReference type="ChEBI" id="CHEBI:132124"/>
    </reaction>
</comment>
<comment type="subunit">
    <text evidence="1">NDH-1 is composed of 14 different subunits. Subunits NuoA, H, J, K, L, M, N constitute the membrane sector of the complex.</text>
</comment>
<comment type="subcellular location">
    <subcellularLocation>
        <location evidence="1">Cell membrane</location>
        <topology evidence="1">Multi-pass membrane protein</topology>
    </subcellularLocation>
</comment>
<comment type="similarity">
    <text evidence="1">Belongs to the complex I subunit 4L family.</text>
</comment>
<protein>
    <recommendedName>
        <fullName evidence="1">NADH-quinone oxidoreductase subunit K</fullName>
        <ecNumber evidence="1">7.1.1.-</ecNumber>
    </recommendedName>
    <alternativeName>
        <fullName evidence="1">NADH dehydrogenase I subunit K</fullName>
    </alternativeName>
    <alternativeName>
        <fullName evidence="1">NDH-1 subunit K</fullName>
    </alternativeName>
</protein>
<evidence type="ECO:0000255" key="1">
    <source>
        <dbReference type="HAMAP-Rule" id="MF_01456"/>
    </source>
</evidence>
<organism>
    <name type="scientific">Chloroflexus aggregans (strain MD-66 / DSM 9485)</name>
    <dbReference type="NCBI Taxonomy" id="326427"/>
    <lineage>
        <taxon>Bacteria</taxon>
        <taxon>Bacillati</taxon>
        <taxon>Chloroflexota</taxon>
        <taxon>Chloroflexia</taxon>
        <taxon>Chloroflexales</taxon>
        <taxon>Chloroflexineae</taxon>
        <taxon>Chloroflexaceae</taxon>
        <taxon>Chloroflexus</taxon>
    </lineage>
</organism>
<accession>B8G6Z6</accession>
<name>NUOK_CHLAD</name>
<proteinExistence type="inferred from homology"/>
<feature type="chain" id="PRO_0000390011" description="NADH-quinone oxidoreductase subunit K">
    <location>
        <begin position="1"/>
        <end position="100"/>
    </location>
</feature>
<feature type="transmembrane region" description="Helical" evidence="1">
    <location>
        <begin position="4"/>
        <end position="24"/>
    </location>
</feature>
<feature type="transmembrane region" description="Helical" evidence="1">
    <location>
        <begin position="29"/>
        <end position="49"/>
    </location>
</feature>
<feature type="transmembrane region" description="Helical" evidence="1">
    <location>
        <begin position="61"/>
        <end position="81"/>
    </location>
</feature>